<gene>
    <name evidence="8 11" type="primary">pph-4.1</name>
    <name evidence="11" type="ORF">Y75B8A.30</name>
</gene>
<sequence length="333" mass="37359">MALACTDSANSTFSRVDSPTSGPSDQLTTHDLDRHIEKLMRCELIAEQDVKTLCAKAREILAEEGNVQVIDSPVTICGDIHGQFYDLMELFKVGGPVPNTNYLFLGDFVDRGFYSVETFLLLLALKARYPDRMMLIRGNHESRQITQVYGFYDECLRKYGNASVWKHCTEVFDYLSLAAVIDGKVFCVHGGLSPSISTMDQIRVIDRKQEVPHDGPMCDLLWSDPEEGNVGWGLSPRGAGYLFGADASKTFCETNGVDLICRAHQLVMEGYKWHFNEKVLTVWSAPNYCYRCGNVAAILELDENLNKEFTIFEAAPQENRGAPAKKPHADYFL</sequence>
<reference key="1">
    <citation type="journal article" date="2002" name="J. Cell Sci.">
        <title>Protein phosphatase 4 is required for centrosome maturation in mitosis and sperm meiosis in C. elegans.</title>
        <authorList>
            <person name="Sumiyoshi E."/>
            <person name="Sugimoto A."/>
            <person name="Yamamoto M."/>
        </authorList>
    </citation>
    <scope>NUCLEOTIDE SEQUENCE [MRNA]</scope>
    <scope>FUNCTION</scope>
    <scope>SUBCELLULAR LOCATION</scope>
    <scope>DEVELOPMENTAL STAGE</scope>
    <scope>DISRUPTION PHENOTYPE</scope>
    <source>
        <strain>Bristol N2</strain>
    </source>
</reference>
<reference key="2">
    <citation type="journal article" date="1998" name="Science">
        <title>Genome sequence of the nematode C. elegans: a platform for investigating biology.</title>
        <authorList>
            <consortium name="The C. elegans sequencing consortium"/>
        </authorList>
    </citation>
    <scope>NUCLEOTIDE SEQUENCE [LARGE SCALE GENOMIC DNA]</scope>
    <source>
        <strain>Bristol N2</strain>
    </source>
</reference>
<reference key="3">
    <citation type="journal article" date="2009" name="Genetics">
        <title>The role of protein phosphatase 4 in regulating microtubule severing in the Caenorhabditis elegans embryo.</title>
        <authorList>
            <person name="Han X."/>
            <person name="Gomes J.E."/>
            <person name="Birmingham C.L."/>
            <person name="Pintard L."/>
            <person name="Sugimoto A."/>
            <person name="Mains P.E."/>
        </authorList>
    </citation>
    <scope>FUNCTION</scope>
    <scope>INTERACTION WITH MEI-1</scope>
    <scope>DISRUPTION PHENOTYPE</scope>
</reference>
<reference key="4">
    <citation type="journal article" date="2014" name="PLoS Genet.">
        <title>Protein phosphatase 4 promotes chromosome pairing and synapsis, and contributes to maintaining crossover competence with increasing age.</title>
        <authorList>
            <person name="Sato-Carlton A."/>
            <person name="Li X."/>
            <person name="Crawley O."/>
            <person name="Testori S."/>
            <person name="Martinez-Perez E."/>
            <person name="Sugimoto A."/>
            <person name="Carlton P.M."/>
        </authorList>
    </citation>
    <scope>FUNCTION</scope>
    <scope>DISRUPTION PHENOTYPE</scope>
    <scope>MUTAGENESIS OF ASP-107 AND ARG-262</scope>
</reference>
<evidence type="ECO:0000250" key="1">
    <source>
        <dbReference type="UniProtKB" id="P36873"/>
    </source>
</evidence>
<evidence type="ECO:0000250" key="2">
    <source>
        <dbReference type="UniProtKB" id="P60510"/>
    </source>
</evidence>
<evidence type="ECO:0000250" key="3">
    <source>
        <dbReference type="UniProtKB" id="P67775"/>
    </source>
</evidence>
<evidence type="ECO:0000256" key="4">
    <source>
        <dbReference type="SAM" id="MobiDB-lite"/>
    </source>
</evidence>
<evidence type="ECO:0000269" key="5">
    <source>
    </source>
</evidence>
<evidence type="ECO:0000269" key="6">
    <source>
    </source>
</evidence>
<evidence type="ECO:0000269" key="7">
    <source>
    </source>
</evidence>
<evidence type="ECO:0000303" key="8">
    <source>
    </source>
</evidence>
<evidence type="ECO:0000305" key="9"/>
<evidence type="ECO:0000305" key="10">
    <source>
    </source>
</evidence>
<evidence type="ECO:0000312" key="11">
    <source>
        <dbReference type="WormBase" id="Y75B8A.30"/>
    </source>
</evidence>
<keyword id="KW-0131">Cell cycle</keyword>
<keyword id="KW-0132">Cell division</keyword>
<keyword id="KW-0963">Cytoplasm</keyword>
<keyword id="KW-0206">Cytoskeleton</keyword>
<keyword id="KW-0378">Hydrolase</keyword>
<keyword id="KW-0464">Manganese</keyword>
<keyword id="KW-0469">Meiosis</keyword>
<keyword id="KW-0479">Metal-binding</keyword>
<keyword id="KW-0488">Methylation</keyword>
<keyword id="KW-0498">Mitosis</keyword>
<keyword id="KW-0904">Protein phosphatase</keyword>
<keyword id="KW-1185">Reference proteome</keyword>
<accession>Q9XW79</accession>
<accession>Q966Q4</accession>
<protein>
    <recommendedName>
        <fullName>Serine/threonine-protein phosphatase 4 catalytic subunit 1</fullName>
        <shortName>PP4C-1</shortName>
        <ecNumber evidence="2">3.1.3.16</ecNumber>
    </recommendedName>
</protein>
<dbReference type="EC" id="3.1.3.16" evidence="2"/>
<dbReference type="EMBL" id="AB070573">
    <property type="protein sequence ID" value="BAB63947.1"/>
    <property type="status" value="ALT_INIT"/>
    <property type="molecule type" value="mRNA"/>
</dbReference>
<dbReference type="EMBL" id="AL033514">
    <property type="protein sequence ID" value="CAA22090.1"/>
    <property type="molecule type" value="Genomic_DNA"/>
</dbReference>
<dbReference type="PIR" id="T27390">
    <property type="entry name" value="T27390"/>
</dbReference>
<dbReference type="RefSeq" id="NP_499603.1">
    <property type="nucleotide sequence ID" value="NM_067202.6"/>
</dbReference>
<dbReference type="SMR" id="Q9XW79"/>
<dbReference type="BioGRID" id="41836">
    <property type="interactions" value="16"/>
</dbReference>
<dbReference type="DIP" id="DIP-24807N"/>
<dbReference type="FunCoup" id="Q9XW79">
    <property type="interactions" value="2729"/>
</dbReference>
<dbReference type="IntAct" id="Q9XW79">
    <property type="interactions" value="7"/>
</dbReference>
<dbReference type="STRING" id="6239.Y75B8A.30.1"/>
<dbReference type="PaxDb" id="6239-Y75B8A.30"/>
<dbReference type="PeptideAtlas" id="Q9XW79"/>
<dbReference type="EnsemblMetazoa" id="Y75B8A.30.1">
    <property type="protein sequence ID" value="Y75B8A.30.1"/>
    <property type="gene ID" value="WBGene00004085"/>
</dbReference>
<dbReference type="GeneID" id="176657"/>
<dbReference type="KEGG" id="cel:CELE_Y75B8A.30"/>
<dbReference type="UCSC" id="Y75B8A.30">
    <property type="organism name" value="c. elegans"/>
</dbReference>
<dbReference type="AGR" id="WB:WBGene00004085"/>
<dbReference type="CTD" id="176657"/>
<dbReference type="WormBase" id="Y75B8A.30">
    <property type="protein sequence ID" value="CE23041"/>
    <property type="gene ID" value="WBGene00004085"/>
    <property type="gene designation" value="pph-4.1"/>
</dbReference>
<dbReference type="eggNOG" id="KOG0372">
    <property type="taxonomic scope" value="Eukaryota"/>
</dbReference>
<dbReference type="GeneTree" id="ENSGT00930000151040"/>
<dbReference type="HOGENOM" id="CLU_004962_8_1_1"/>
<dbReference type="InParanoid" id="Q9XW79"/>
<dbReference type="OMA" id="QSTMPID"/>
<dbReference type="OrthoDB" id="1930084at2759"/>
<dbReference type="PhylomeDB" id="Q9XW79"/>
<dbReference type="SignaLink" id="Q9XW79"/>
<dbReference type="CD-CODE" id="1E117272">
    <property type="entry name" value="Centrosome"/>
</dbReference>
<dbReference type="PRO" id="PR:Q9XW79"/>
<dbReference type="Proteomes" id="UP000001940">
    <property type="component" value="Chromosome III"/>
</dbReference>
<dbReference type="Bgee" id="WBGene00004085">
    <property type="expression patterns" value="Expressed in pharyngeal muscle cell (C elegans) and 4 other cell types or tissues"/>
</dbReference>
<dbReference type="GO" id="GO:0005813">
    <property type="term" value="C:centrosome"/>
    <property type="evidence" value="ECO:0000314"/>
    <property type="project" value="WormBase"/>
</dbReference>
<dbReference type="GO" id="GO:0005737">
    <property type="term" value="C:cytoplasm"/>
    <property type="evidence" value="ECO:0000314"/>
    <property type="project" value="WormBase"/>
</dbReference>
<dbReference type="GO" id="GO:0005634">
    <property type="term" value="C:nucleus"/>
    <property type="evidence" value="ECO:0000318"/>
    <property type="project" value="GO_Central"/>
</dbReference>
<dbReference type="GO" id="GO:0046872">
    <property type="term" value="F:metal ion binding"/>
    <property type="evidence" value="ECO:0007669"/>
    <property type="project" value="UniProtKB-KW"/>
</dbReference>
<dbReference type="GO" id="GO:0004722">
    <property type="term" value="F:protein serine/threonine phosphatase activity"/>
    <property type="evidence" value="ECO:0000250"/>
    <property type="project" value="WormBase"/>
</dbReference>
<dbReference type="GO" id="GO:0051301">
    <property type="term" value="P:cell division"/>
    <property type="evidence" value="ECO:0007669"/>
    <property type="project" value="UniProtKB-KW"/>
</dbReference>
<dbReference type="GO" id="GO:0051026">
    <property type="term" value="P:chiasma assembly"/>
    <property type="evidence" value="ECO:0000315"/>
    <property type="project" value="UniProtKB"/>
</dbReference>
<dbReference type="GO" id="GO:0016311">
    <property type="term" value="P:dephosphorylation"/>
    <property type="evidence" value="ECO:0000250"/>
    <property type="project" value="WormBase"/>
</dbReference>
<dbReference type="GO" id="GO:0000724">
    <property type="term" value="P:double-strand break repair via homologous recombination"/>
    <property type="evidence" value="ECO:0000318"/>
    <property type="project" value="GO_Central"/>
</dbReference>
<dbReference type="GO" id="GO:0009792">
    <property type="term" value="P:embryo development ending in birth or egg hatching"/>
    <property type="evidence" value="ECO:0000316"/>
    <property type="project" value="UniProtKB"/>
</dbReference>
<dbReference type="GO" id="GO:0051321">
    <property type="term" value="P:meiotic cell cycle"/>
    <property type="evidence" value="ECO:0000315"/>
    <property type="project" value="WormBase"/>
</dbReference>
<dbReference type="GO" id="GO:1905261">
    <property type="term" value="P:regulation of meiotic DNA double-strand break formation involved in reciprocal meiotic recombination"/>
    <property type="evidence" value="ECO:0000315"/>
    <property type="project" value="UniProtKB"/>
</dbReference>
<dbReference type="CDD" id="cd07415">
    <property type="entry name" value="MPP_PP2A_PP4_PP6"/>
    <property type="match status" value="1"/>
</dbReference>
<dbReference type="FunFam" id="3.60.21.10:FF:000010">
    <property type="entry name" value="Serine/threonine-protein phosphatase"/>
    <property type="match status" value="1"/>
</dbReference>
<dbReference type="Gene3D" id="3.60.21.10">
    <property type="match status" value="1"/>
</dbReference>
<dbReference type="InterPro" id="IPR004843">
    <property type="entry name" value="Calcineurin-like_PHP_ApaH"/>
</dbReference>
<dbReference type="InterPro" id="IPR029052">
    <property type="entry name" value="Metallo-depent_PP-like"/>
</dbReference>
<dbReference type="InterPro" id="IPR047129">
    <property type="entry name" value="PPA2-like"/>
</dbReference>
<dbReference type="InterPro" id="IPR006186">
    <property type="entry name" value="Ser/Thr-sp_prot-phosphatase"/>
</dbReference>
<dbReference type="PANTHER" id="PTHR45619">
    <property type="entry name" value="SERINE/THREONINE-PROTEIN PHOSPHATASE PP2A-RELATED"/>
    <property type="match status" value="1"/>
</dbReference>
<dbReference type="Pfam" id="PF00149">
    <property type="entry name" value="Metallophos"/>
    <property type="match status" value="1"/>
</dbReference>
<dbReference type="PRINTS" id="PR00114">
    <property type="entry name" value="STPHPHTASE"/>
</dbReference>
<dbReference type="SMART" id="SM00156">
    <property type="entry name" value="PP2Ac"/>
    <property type="match status" value="1"/>
</dbReference>
<dbReference type="SUPFAM" id="SSF56300">
    <property type="entry name" value="Metallo-dependent phosphatases"/>
    <property type="match status" value="1"/>
</dbReference>
<dbReference type="PROSITE" id="PS00125">
    <property type="entry name" value="SER_THR_PHOSPHATASE"/>
    <property type="match status" value="1"/>
</dbReference>
<feature type="chain" id="PRO_0000353210" description="Serine/threonine-protein phosphatase 4 catalytic subunit 1">
    <location>
        <begin position="1"/>
        <end position="333"/>
    </location>
</feature>
<feature type="region of interest" description="Disordered" evidence="4">
    <location>
        <begin position="1"/>
        <end position="28"/>
    </location>
</feature>
<feature type="compositionally biased region" description="Polar residues" evidence="4">
    <location>
        <begin position="7"/>
        <end position="27"/>
    </location>
</feature>
<feature type="active site" description="Proton donor" evidence="1">
    <location>
        <position position="140"/>
    </location>
</feature>
<feature type="binding site" evidence="3">
    <location>
        <position position="79"/>
    </location>
    <ligand>
        <name>Mn(2+)</name>
        <dbReference type="ChEBI" id="CHEBI:29035"/>
        <label>1</label>
    </ligand>
</feature>
<feature type="binding site" evidence="3">
    <location>
        <position position="81"/>
    </location>
    <ligand>
        <name>Mn(2+)</name>
        <dbReference type="ChEBI" id="CHEBI:29035"/>
        <label>1</label>
    </ligand>
</feature>
<feature type="binding site" evidence="3">
    <location>
        <position position="107"/>
    </location>
    <ligand>
        <name>Mn(2+)</name>
        <dbReference type="ChEBI" id="CHEBI:29035"/>
        <label>1</label>
    </ligand>
</feature>
<feature type="binding site" evidence="3">
    <location>
        <position position="107"/>
    </location>
    <ligand>
        <name>Mn(2+)</name>
        <dbReference type="ChEBI" id="CHEBI:29035"/>
        <label>2</label>
    </ligand>
</feature>
<feature type="binding site" evidence="3">
    <location>
        <position position="139"/>
    </location>
    <ligand>
        <name>Mn(2+)</name>
        <dbReference type="ChEBI" id="CHEBI:29035"/>
        <label>2</label>
    </ligand>
</feature>
<feature type="binding site" evidence="3">
    <location>
        <position position="189"/>
    </location>
    <ligand>
        <name>Mn(2+)</name>
        <dbReference type="ChEBI" id="CHEBI:29035"/>
        <label>2</label>
    </ligand>
</feature>
<feature type="binding site" evidence="3">
    <location>
        <position position="264"/>
    </location>
    <ligand>
        <name>Mn(2+)</name>
        <dbReference type="ChEBI" id="CHEBI:29035"/>
        <label>2</label>
    </ligand>
</feature>
<feature type="modified residue" description="Leucine methyl ester" evidence="3">
    <location>
        <position position="333"/>
    </location>
</feature>
<feature type="mutagenesis site" description="Probable loss of catalytic activity. Severe loss of bivalent chromosome formation in diakinetic oocytes." evidence="7">
    <original>D</original>
    <variation>A</variation>
    <location>
        <position position="107"/>
    </location>
</feature>
<feature type="mutagenesis site" description="Probable loss of catalytic activity. Severe loss of bivalent chromosome formation in diakinetic oocytes." evidence="7">
    <original>R</original>
    <variation>L</variation>
    <location>
        <position position="262"/>
    </location>
</feature>
<comment type="function">
    <text evidence="5 6 7">Protein phosphatase which plays an essential role in meiosis and in early embryonic mitosis (PubMed:11896188, PubMed:25340746). During spermatocyte meiosis and the first embryonic mitosis, regulates centrosome maturation, and thus spindle formation, by recruiting some of the components of the pericentriolar material (PCM) (PubMed:11896188). During oocyte meiosis I, regulates meiotic chromosome dynamics including synapsis-independent chromosome pairing, restriction of synapsis to homologous chromosomes, programmed DNA double-strand break initiation and crossover formation resulting in chiasma formation (PubMed:11896188, PubMed:25340746). During oocyte meiosis II and probably together with regulatory subunit ppfr-1, may regulate microtubule severing by dephosphorylating and activating mei-1, a component of the katanin microtubule severing complex (PubMed:19087961).</text>
</comment>
<comment type="catalytic activity">
    <reaction evidence="2">
        <text>O-phospho-L-seryl-[protein] + H2O = L-seryl-[protein] + phosphate</text>
        <dbReference type="Rhea" id="RHEA:20629"/>
        <dbReference type="Rhea" id="RHEA-COMP:9863"/>
        <dbReference type="Rhea" id="RHEA-COMP:11604"/>
        <dbReference type="ChEBI" id="CHEBI:15377"/>
        <dbReference type="ChEBI" id="CHEBI:29999"/>
        <dbReference type="ChEBI" id="CHEBI:43474"/>
        <dbReference type="ChEBI" id="CHEBI:83421"/>
        <dbReference type="EC" id="3.1.3.16"/>
    </reaction>
</comment>
<comment type="catalytic activity">
    <reaction evidence="2">
        <text>O-phospho-L-threonyl-[protein] + H2O = L-threonyl-[protein] + phosphate</text>
        <dbReference type="Rhea" id="RHEA:47004"/>
        <dbReference type="Rhea" id="RHEA-COMP:11060"/>
        <dbReference type="Rhea" id="RHEA-COMP:11605"/>
        <dbReference type="ChEBI" id="CHEBI:15377"/>
        <dbReference type="ChEBI" id="CHEBI:30013"/>
        <dbReference type="ChEBI" id="CHEBI:43474"/>
        <dbReference type="ChEBI" id="CHEBI:61977"/>
        <dbReference type="EC" id="3.1.3.16"/>
    </reaction>
</comment>
<comment type="cofactor">
    <cofactor evidence="3">
        <name>Mn(2+)</name>
        <dbReference type="ChEBI" id="CHEBI:29035"/>
    </cofactor>
    <text evidence="3">Binds 2 manganese ions per subunit.</text>
</comment>
<comment type="subunit">
    <text evidence="2 6 10">Serine/threonine-protein phosphatase 4 (PP4) occurs in different assemblies of the catalytic and one or more regulatory subunits (By similarity). The regulatory subunits are likely to be ppfr-1, ppfr-2, ppfr-4 and smk-1 (PubMed:19087961). Interacts with mei-1 (PubMed:19087961).</text>
</comment>
<comment type="interaction">
    <interactant intactId="EBI-331742">
        <id>Q9XW79</id>
    </interactant>
    <interactant intactId="EBI-331766">
        <id>Q9N4E9</id>
        <label>ppfr-4</label>
    </interactant>
    <organismsDiffer>false</organismsDiffer>
    <experiments>3</experiments>
</comment>
<comment type="subcellular location">
    <subcellularLocation>
        <location evidence="5">Cytoplasm</location>
    </subcellularLocation>
    <subcellularLocation>
        <location evidence="5">Cytoplasm</location>
        <location evidence="5">Cytoskeleton</location>
        <location evidence="5">Microtubule organizing center</location>
        <location evidence="5">Centrosome</location>
    </subcellularLocation>
    <text evidence="5">Localizes at centrosomes from prophase to telophase but not during interphase. Also localizes to the cytoplasm throughout the cell cycle.</text>
</comment>
<comment type="developmental stage">
    <text evidence="5">Expressed in embryos (at protein level).</text>
</comment>
<comment type="PTM">
    <text evidence="2">Methylation at the C-terminal Leu-333 is critical for interactions with regulatory subunits.</text>
</comment>
<comment type="disruption phenotype">
    <text evidence="5 6 7">Severe embryonic lethality associated with a high incidence of male progeny (PubMed:25340746). RNAi-mediated knockdown causes 20 percent embryonic lethality and 18 percent larval lethality (PubMed:11896188). Abnormal meiosis and mitosis leading to defects in gametogenesis and embryogenesis (PubMed:11896188, PubMed:25340746). In spermatocytes, defects in the organization of astral microtubules (PubMed:11896188). In oocyte meiosis I, defects in autosomal chromosome pairing resulting from abnormal synapsis (PubMed:25340746). In embryos, RNAi-mediated knockdown causes abnormal mitosis due to defects in astral microtubules organization (PubMed:11896188). In a gain of function mei-1 (ct46) or in mel-26 (ct61sb4) mutant background, RNAi-mediated knockdown partially rescues embryonic lethality without affecting mei-1 expression levels and localization (PubMed:19087961).</text>
</comment>
<comment type="similarity">
    <text evidence="9">Belongs to the PPP phosphatase family. PP-4 (PP-X) subfamily.</text>
</comment>
<comment type="sequence caution" evidence="9">
    <conflict type="erroneous initiation">
        <sequence resource="EMBL-CDS" id="BAB63947"/>
    </conflict>
    <text>Truncated N-terminus.</text>
</comment>
<proteinExistence type="evidence at protein level"/>
<name>PP4C1_CAEEL</name>
<organism>
    <name type="scientific">Caenorhabditis elegans</name>
    <dbReference type="NCBI Taxonomy" id="6239"/>
    <lineage>
        <taxon>Eukaryota</taxon>
        <taxon>Metazoa</taxon>
        <taxon>Ecdysozoa</taxon>
        <taxon>Nematoda</taxon>
        <taxon>Chromadorea</taxon>
        <taxon>Rhabditida</taxon>
        <taxon>Rhabditina</taxon>
        <taxon>Rhabditomorpha</taxon>
        <taxon>Rhabditoidea</taxon>
        <taxon>Rhabditidae</taxon>
        <taxon>Peloderinae</taxon>
        <taxon>Caenorhabditis</taxon>
    </lineage>
</organism>